<name>RSMG_DEHMC</name>
<evidence type="ECO:0000255" key="1">
    <source>
        <dbReference type="HAMAP-Rule" id="MF_00074"/>
    </source>
</evidence>
<feature type="chain" id="PRO_0000335344" description="Ribosomal RNA small subunit methyltransferase G">
    <location>
        <begin position="1"/>
        <end position="235"/>
    </location>
</feature>
<feature type="binding site" evidence="1">
    <location>
        <position position="74"/>
    </location>
    <ligand>
        <name>S-adenosyl-L-methionine</name>
        <dbReference type="ChEBI" id="CHEBI:59789"/>
    </ligand>
</feature>
<feature type="binding site" evidence="1">
    <location>
        <position position="79"/>
    </location>
    <ligand>
        <name>S-adenosyl-L-methionine</name>
        <dbReference type="ChEBI" id="CHEBI:59789"/>
    </ligand>
</feature>
<feature type="binding site" evidence="1">
    <location>
        <begin position="97"/>
        <end position="99"/>
    </location>
    <ligand>
        <name>S-adenosyl-L-methionine</name>
        <dbReference type="ChEBI" id="CHEBI:59789"/>
    </ligand>
</feature>
<feature type="binding site" evidence="1">
    <location>
        <begin position="125"/>
        <end position="126"/>
    </location>
    <ligand>
        <name>S-adenosyl-L-methionine</name>
        <dbReference type="ChEBI" id="CHEBI:59789"/>
    </ligand>
</feature>
<feature type="binding site" evidence="1">
    <location>
        <position position="144"/>
    </location>
    <ligand>
        <name>S-adenosyl-L-methionine</name>
        <dbReference type="ChEBI" id="CHEBI:59789"/>
    </ligand>
</feature>
<comment type="function">
    <text evidence="1">Specifically methylates the N7 position of a guanine in 16S rRNA.</text>
</comment>
<comment type="subcellular location">
    <subcellularLocation>
        <location evidence="1">Cytoplasm</location>
    </subcellularLocation>
</comment>
<comment type="similarity">
    <text evidence="1">Belongs to the methyltransferase superfamily. RNA methyltransferase RsmG family.</text>
</comment>
<proteinExistence type="inferred from homology"/>
<gene>
    <name evidence="1" type="primary">rsmG</name>
    <name type="ordered locus">cbdbA750</name>
</gene>
<accession>Q3ZXE0</accession>
<protein>
    <recommendedName>
        <fullName evidence="1">Ribosomal RNA small subunit methyltransferase G</fullName>
        <ecNumber evidence="1">2.1.1.-</ecNumber>
    </recommendedName>
    <alternativeName>
        <fullName evidence="1">16S rRNA 7-methylguanosine methyltransferase</fullName>
        <shortName evidence="1">16S rRNA m7G methyltransferase</shortName>
    </alternativeName>
</protein>
<sequence>MNELVYGLSALGISLNSVQLGQFETYYQELVDYNSRINLTAITEYKDVQIKHFLDSVSLVLAGIKGDEKLLDVGSGAGFPGLPLKILFPAIQLGLLEATQKKARFLSEITVKLGLSGVEIISQRAEDTAQNPLYRQKYSLVTSRAVADMATLAELTLPFCAVGGRVIAPKKGDIEEEMDRAATAVKKMGGRVFKVIKVELPGLEDGRKLVLLEKISNTPALYPRRAGIPAKTPLI</sequence>
<organism>
    <name type="scientific">Dehalococcoides mccartyi (strain CBDB1)</name>
    <dbReference type="NCBI Taxonomy" id="255470"/>
    <lineage>
        <taxon>Bacteria</taxon>
        <taxon>Bacillati</taxon>
        <taxon>Chloroflexota</taxon>
        <taxon>Dehalococcoidia</taxon>
        <taxon>Dehalococcoidales</taxon>
        <taxon>Dehalococcoidaceae</taxon>
        <taxon>Dehalococcoides</taxon>
    </lineage>
</organism>
<reference key="1">
    <citation type="journal article" date="2005" name="Nat. Biotechnol.">
        <title>Genome sequence of the chlorinated compound-respiring bacterium Dehalococcoides species strain CBDB1.</title>
        <authorList>
            <person name="Kube M."/>
            <person name="Beck A."/>
            <person name="Zinder S.H."/>
            <person name="Kuhl H."/>
            <person name="Reinhardt R."/>
            <person name="Adrian L."/>
        </authorList>
    </citation>
    <scope>NUCLEOTIDE SEQUENCE [LARGE SCALE GENOMIC DNA]</scope>
    <source>
        <strain>CBDB1</strain>
    </source>
</reference>
<keyword id="KW-0963">Cytoplasm</keyword>
<keyword id="KW-0489">Methyltransferase</keyword>
<keyword id="KW-0698">rRNA processing</keyword>
<keyword id="KW-0949">S-adenosyl-L-methionine</keyword>
<keyword id="KW-0808">Transferase</keyword>
<dbReference type="EC" id="2.1.1.-" evidence="1"/>
<dbReference type="EMBL" id="AJ965256">
    <property type="protein sequence ID" value="CAI82909.1"/>
    <property type="molecule type" value="Genomic_DNA"/>
</dbReference>
<dbReference type="RefSeq" id="WP_011309260.1">
    <property type="nucleotide sequence ID" value="NC_007356.1"/>
</dbReference>
<dbReference type="SMR" id="Q3ZXE0"/>
<dbReference type="KEGG" id="deh:cbdbA750"/>
<dbReference type="HOGENOM" id="CLU_065341_0_0_0"/>
<dbReference type="Proteomes" id="UP000000433">
    <property type="component" value="Chromosome"/>
</dbReference>
<dbReference type="GO" id="GO:0005829">
    <property type="term" value="C:cytosol"/>
    <property type="evidence" value="ECO:0007669"/>
    <property type="project" value="TreeGrafter"/>
</dbReference>
<dbReference type="GO" id="GO:0070043">
    <property type="term" value="F:rRNA (guanine-N7-)-methyltransferase activity"/>
    <property type="evidence" value="ECO:0007669"/>
    <property type="project" value="UniProtKB-UniRule"/>
</dbReference>
<dbReference type="FunFam" id="3.40.50.150:FF:000041">
    <property type="entry name" value="Ribosomal RNA small subunit methyltransferase G"/>
    <property type="match status" value="1"/>
</dbReference>
<dbReference type="Gene3D" id="3.40.50.150">
    <property type="entry name" value="Vaccinia Virus protein VP39"/>
    <property type="match status" value="1"/>
</dbReference>
<dbReference type="HAMAP" id="MF_00074">
    <property type="entry name" value="16SrRNA_methyltr_G"/>
    <property type="match status" value="1"/>
</dbReference>
<dbReference type="InterPro" id="IPR003682">
    <property type="entry name" value="rRNA_ssu_MeTfrase_G"/>
</dbReference>
<dbReference type="InterPro" id="IPR029063">
    <property type="entry name" value="SAM-dependent_MTases_sf"/>
</dbReference>
<dbReference type="NCBIfam" id="TIGR00138">
    <property type="entry name" value="rsmG_gidB"/>
    <property type="match status" value="1"/>
</dbReference>
<dbReference type="PANTHER" id="PTHR31760">
    <property type="entry name" value="S-ADENOSYL-L-METHIONINE-DEPENDENT METHYLTRANSFERASES SUPERFAMILY PROTEIN"/>
    <property type="match status" value="1"/>
</dbReference>
<dbReference type="PANTHER" id="PTHR31760:SF0">
    <property type="entry name" value="S-ADENOSYL-L-METHIONINE-DEPENDENT METHYLTRANSFERASES SUPERFAMILY PROTEIN"/>
    <property type="match status" value="1"/>
</dbReference>
<dbReference type="Pfam" id="PF02527">
    <property type="entry name" value="GidB"/>
    <property type="match status" value="1"/>
</dbReference>
<dbReference type="PIRSF" id="PIRSF003078">
    <property type="entry name" value="GidB"/>
    <property type="match status" value="1"/>
</dbReference>
<dbReference type="SUPFAM" id="SSF53335">
    <property type="entry name" value="S-adenosyl-L-methionine-dependent methyltransferases"/>
    <property type="match status" value="1"/>
</dbReference>